<reference key="1">
    <citation type="submission" date="1999-06" db="EMBL/GenBank/DDBJ databases">
        <title>A molecular phylogeny of ground squirrels and prairie dogs.</title>
        <authorList>
            <person name="Harrison R.G."/>
            <person name="Sherman P.W."/>
            <person name="Yensen E."/>
            <person name="Hoffmann R.S."/>
            <person name="Bogdanowicz S.M."/>
        </authorList>
    </citation>
    <scope>NUCLEOTIDE SEQUENCE [GENOMIC DNA]</scope>
    <source>
        <strain>Isolate S49</strain>
        <strain>Isolate S52</strain>
    </source>
</reference>
<protein>
    <recommendedName>
        <fullName>Cytochrome b</fullName>
    </recommendedName>
    <alternativeName>
        <fullName>Complex III subunit 3</fullName>
    </alternativeName>
    <alternativeName>
        <fullName>Complex III subunit III</fullName>
    </alternativeName>
    <alternativeName>
        <fullName>Cytochrome b-c1 complex subunit 3</fullName>
    </alternativeName>
    <alternativeName>
        <fullName>Ubiquinol-cytochrome-c reductase complex cytochrome b subunit</fullName>
    </alternativeName>
</protein>
<keyword id="KW-0249">Electron transport</keyword>
<keyword id="KW-0349">Heme</keyword>
<keyword id="KW-0408">Iron</keyword>
<keyword id="KW-0472">Membrane</keyword>
<keyword id="KW-0479">Metal-binding</keyword>
<keyword id="KW-0496">Mitochondrion</keyword>
<keyword id="KW-0999">Mitochondrion inner membrane</keyword>
<keyword id="KW-0679">Respiratory chain</keyword>
<keyword id="KW-0812">Transmembrane</keyword>
<keyword id="KW-1133">Transmembrane helix</keyword>
<keyword id="KW-0813">Transport</keyword>
<keyword id="KW-0830">Ubiquinone</keyword>
<sequence length="379" mass="42896">MTNTRKTHPLIKIINHSFIDLPAPSNISAWWNFGSLLGLCLIIQILTGLFLAMHYTSDTMTAFSSVTHICRDVNYGWLIRYIHANGASMFFICLFLHVGRGLYYGSYTYFETWNIGVILLFAVMATAFMGYVLPWGQMSFWGATVITNLLSAIPYIGTTLVEWIWGGFSVDKATLTRFFAFHFILPFIIAALVMIHLLFLHETGSNNPSGLISDSDKIPFHPYYTIKDVLGVLLLVLTLMILVLFSPDLLGDPDNYTPANPLSTPPHIKPEWYFLFAYAILRSIPNKLGGVLALIFSILILMLFPLLHLSKQRSMMFRPLSQCVFWVLVADLFTLTWIGGQPVEHPFIIIGQLASVLYFTIILLILPTVSMIENKLLKW</sequence>
<accession>Q9T3Y2</accession>
<feature type="chain" id="PRO_0000061598" description="Cytochrome b">
    <location>
        <begin position="1"/>
        <end position="379"/>
    </location>
</feature>
<feature type="transmembrane region" description="Helical" evidence="2">
    <location>
        <begin position="33"/>
        <end position="53"/>
    </location>
</feature>
<feature type="transmembrane region" description="Helical" evidence="2">
    <location>
        <begin position="77"/>
        <end position="98"/>
    </location>
</feature>
<feature type="transmembrane region" description="Helical" evidence="2">
    <location>
        <begin position="113"/>
        <end position="133"/>
    </location>
</feature>
<feature type="transmembrane region" description="Helical" evidence="2">
    <location>
        <begin position="178"/>
        <end position="198"/>
    </location>
</feature>
<feature type="transmembrane region" description="Helical" evidence="2">
    <location>
        <begin position="226"/>
        <end position="246"/>
    </location>
</feature>
<feature type="transmembrane region" description="Helical" evidence="2">
    <location>
        <begin position="288"/>
        <end position="308"/>
    </location>
</feature>
<feature type="transmembrane region" description="Helical" evidence="2">
    <location>
        <begin position="320"/>
        <end position="340"/>
    </location>
</feature>
<feature type="transmembrane region" description="Helical" evidence="2">
    <location>
        <begin position="347"/>
        <end position="367"/>
    </location>
</feature>
<feature type="binding site" description="axial binding residue" evidence="2">
    <location>
        <position position="83"/>
    </location>
    <ligand>
        <name>heme b</name>
        <dbReference type="ChEBI" id="CHEBI:60344"/>
        <label>b562</label>
    </ligand>
    <ligandPart>
        <name>Fe</name>
        <dbReference type="ChEBI" id="CHEBI:18248"/>
    </ligandPart>
</feature>
<feature type="binding site" description="axial binding residue" evidence="2">
    <location>
        <position position="97"/>
    </location>
    <ligand>
        <name>heme b</name>
        <dbReference type="ChEBI" id="CHEBI:60344"/>
        <label>b566</label>
    </ligand>
    <ligandPart>
        <name>Fe</name>
        <dbReference type="ChEBI" id="CHEBI:18248"/>
    </ligandPart>
</feature>
<feature type="binding site" description="axial binding residue" evidence="2">
    <location>
        <position position="182"/>
    </location>
    <ligand>
        <name>heme b</name>
        <dbReference type="ChEBI" id="CHEBI:60344"/>
        <label>b562</label>
    </ligand>
    <ligandPart>
        <name>Fe</name>
        <dbReference type="ChEBI" id="CHEBI:18248"/>
    </ligandPart>
</feature>
<feature type="binding site" description="axial binding residue" evidence="2">
    <location>
        <position position="196"/>
    </location>
    <ligand>
        <name>heme b</name>
        <dbReference type="ChEBI" id="CHEBI:60344"/>
        <label>b566</label>
    </ligand>
    <ligandPart>
        <name>Fe</name>
        <dbReference type="ChEBI" id="CHEBI:18248"/>
    </ligandPart>
</feature>
<feature type="binding site" evidence="2">
    <location>
        <position position="201"/>
    </location>
    <ligand>
        <name>a ubiquinone</name>
        <dbReference type="ChEBI" id="CHEBI:16389"/>
    </ligand>
</feature>
<evidence type="ECO:0000250" key="1"/>
<evidence type="ECO:0000250" key="2">
    <source>
        <dbReference type="UniProtKB" id="P00157"/>
    </source>
</evidence>
<evidence type="ECO:0000255" key="3">
    <source>
        <dbReference type="PROSITE-ProRule" id="PRU00967"/>
    </source>
</evidence>
<evidence type="ECO:0000255" key="4">
    <source>
        <dbReference type="PROSITE-ProRule" id="PRU00968"/>
    </source>
</evidence>
<organism>
    <name type="scientific">Spermophilus musicus</name>
    <name type="common">Caucasian mountain ground squirrel</name>
    <dbReference type="NCBI Taxonomy" id="99848"/>
    <lineage>
        <taxon>Eukaryota</taxon>
        <taxon>Metazoa</taxon>
        <taxon>Chordata</taxon>
        <taxon>Craniata</taxon>
        <taxon>Vertebrata</taxon>
        <taxon>Euteleostomi</taxon>
        <taxon>Mammalia</taxon>
        <taxon>Eutheria</taxon>
        <taxon>Euarchontoglires</taxon>
        <taxon>Glires</taxon>
        <taxon>Rodentia</taxon>
        <taxon>Sciuromorpha</taxon>
        <taxon>Sciuridae</taxon>
        <taxon>Xerinae</taxon>
        <taxon>Marmotini</taxon>
        <taxon>Spermophilus</taxon>
    </lineage>
</organism>
<geneLocation type="mitochondrion"/>
<name>CYB_SPEMU</name>
<proteinExistence type="inferred from homology"/>
<dbReference type="EMBL" id="AF157900">
    <property type="protein sequence ID" value="AAD50184.1"/>
    <property type="molecule type" value="Genomic_DNA"/>
</dbReference>
<dbReference type="EMBL" id="AF157904">
    <property type="protein sequence ID" value="AAD50188.1"/>
    <property type="molecule type" value="Genomic_DNA"/>
</dbReference>
<dbReference type="SMR" id="Q9T3Y2"/>
<dbReference type="GO" id="GO:0005743">
    <property type="term" value="C:mitochondrial inner membrane"/>
    <property type="evidence" value="ECO:0007669"/>
    <property type="project" value="UniProtKB-SubCell"/>
</dbReference>
<dbReference type="GO" id="GO:0045275">
    <property type="term" value="C:respiratory chain complex III"/>
    <property type="evidence" value="ECO:0007669"/>
    <property type="project" value="InterPro"/>
</dbReference>
<dbReference type="GO" id="GO:0046872">
    <property type="term" value="F:metal ion binding"/>
    <property type="evidence" value="ECO:0007669"/>
    <property type="project" value="UniProtKB-KW"/>
</dbReference>
<dbReference type="GO" id="GO:0008121">
    <property type="term" value="F:ubiquinol-cytochrome-c reductase activity"/>
    <property type="evidence" value="ECO:0007669"/>
    <property type="project" value="InterPro"/>
</dbReference>
<dbReference type="GO" id="GO:0006122">
    <property type="term" value="P:mitochondrial electron transport, ubiquinol to cytochrome c"/>
    <property type="evidence" value="ECO:0007669"/>
    <property type="project" value="TreeGrafter"/>
</dbReference>
<dbReference type="CDD" id="cd00290">
    <property type="entry name" value="cytochrome_b_C"/>
    <property type="match status" value="1"/>
</dbReference>
<dbReference type="CDD" id="cd00284">
    <property type="entry name" value="Cytochrome_b_N"/>
    <property type="match status" value="1"/>
</dbReference>
<dbReference type="FunFam" id="1.20.810.10:FF:000002">
    <property type="entry name" value="Cytochrome b"/>
    <property type="match status" value="1"/>
</dbReference>
<dbReference type="Gene3D" id="1.20.810.10">
    <property type="entry name" value="Cytochrome Bc1 Complex, Chain C"/>
    <property type="match status" value="1"/>
</dbReference>
<dbReference type="InterPro" id="IPR005798">
    <property type="entry name" value="Cyt_b/b6_C"/>
</dbReference>
<dbReference type="InterPro" id="IPR036150">
    <property type="entry name" value="Cyt_b/b6_C_sf"/>
</dbReference>
<dbReference type="InterPro" id="IPR005797">
    <property type="entry name" value="Cyt_b/b6_N"/>
</dbReference>
<dbReference type="InterPro" id="IPR027387">
    <property type="entry name" value="Cytb/b6-like_sf"/>
</dbReference>
<dbReference type="InterPro" id="IPR030689">
    <property type="entry name" value="Cytochrome_b"/>
</dbReference>
<dbReference type="InterPro" id="IPR048260">
    <property type="entry name" value="Cytochrome_b_C_euk/bac"/>
</dbReference>
<dbReference type="InterPro" id="IPR048259">
    <property type="entry name" value="Cytochrome_b_N_euk/bac"/>
</dbReference>
<dbReference type="InterPro" id="IPR016174">
    <property type="entry name" value="Di-haem_cyt_TM"/>
</dbReference>
<dbReference type="PANTHER" id="PTHR19271">
    <property type="entry name" value="CYTOCHROME B"/>
    <property type="match status" value="1"/>
</dbReference>
<dbReference type="PANTHER" id="PTHR19271:SF16">
    <property type="entry name" value="CYTOCHROME B"/>
    <property type="match status" value="1"/>
</dbReference>
<dbReference type="Pfam" id="PF00032">
    <property type="entry name" value="Cytochrom_B_C"/>
    <property type="match status" value="1"/>
</dbReference>
<dbReference type="Pfam" id="PF00033">
    <property type="entry name" value="Cytochrome_B"/>
    <property type="match status" value="1"/>
</dbReference>
<dbReference type="PIRSF" id="PIRSF038885">
    <property type="entry name" value="COB"/>
    <property type="match status" value="1"/>
</dbReference>
<dbReference type="SUPFAM" id="SSF81648">
    <property type="entry name" value="a domain/subunit of cytochrome bc1 complex (Ubiquinol-cytochrome c reductase)"/>
    <property type="match status" value="1"/>
</dbReference>
<dbReference type="SUPFAM" id="SSF81342">
    <property type="entry name" value="Transmembrane di-heme cytochromes"/>
    <property type="match status" value="1"/>
</dbReference>
<dbReference type="PROSITE" id="PS51003">
    <property type="entry name" value="CYTB_CTER"/>
    <property type="match status" value="1"/>
</dbReference>
<dbReference type="PROSITE" id="PS51002">
    <property type="entry name" value="CYTB_NTER"/>
    <property type="match status" value="1"/>
</dbReference>
<gene>
    <name type="primary">MT-CYB</name>
    <name type="synonym">COB</name>
    <name type="synonym">CYTB</name>
    <name type="synonym">MTCYB</name>
</gene>
<comment type="function">
    <text evidence="2">Component of the ubiquinol-cytochrome c reductase complex (complex III or cytochrome b-c1 complex) that is part of the mitochondrial respiratory chain. The b-c1 complex mediates electron transfer from ubiquinol to cytochrome c. Contributes to the generation of a proton gradient across the mitochondrial membrane that is then used for ATP synthesis.</text>
</comment>
<comment type="cofactor">
    <cofactor evidence="2">
        <name>heme b</name>
        <dbReference type="ChEBI" id="CHEBI:60344"/>
    </cofactor>
    <text evidence="2">Binds 2 heme b groups non-covalently.</text>
</comment>
<comment type="subunit">
    <text evidence="2">The cytochrome bc1 complex contains 11 subunits: 3 respiratory subunits (MT-CYB, CYC1 and UQCRFS1), 2 core proteins (UQCRC1 and UQCRC2) and 6 low-molecular weight proteins (UQCRH/QCR6, UQCRB/QCR7, UQCRQ/QCR8, UQCR10/QCR9, UQCR11/QCR10 and a cleavage product of UQCRFS1). This cytochrome bc1 complex then forms a dimer.</text>
</comment>
<comment type="subcellular location">
    <subcellularLocation>
        <location evidence="2">Mitochondrion inner membrane</location>
        <topology evidence="2">Multi-pass membrane protein</topology>
    </subcellularLocation>
</comment>
<comment type="miscellaneous">
    <text evidence="1">Heme 1 (or BL or b562) is low-potential and absorbs at about 562 nm, and heme 2 (or BH or b566) is high-potential and absorbs at about 566 nm.</text>
</comment>
<comment type="similarity">
    <text evidence="3 4">Belongs to the cytochrome b family.</text>
</comment>
<comment type="caution">
    <text evidence="2">The full-length protein contains only eight transmembrane helices, not nine as predicted by bioinformatics tools.</text>
</comment>